<accession>B0VNK4</accession>
<protein>
    <recommendedName>
        <fullName evidence="1">ATP synthase subunit beta</fullName>
        <ecNumber evidence="1">7.1.2.2</ecNumber>
    </recommendedName>
    <alternativeName>
        <fullName evidence="1">ATP synthase F1 sector subunit beta</fullName>
    </alternativeName>
    <alternativeName>
        <fullName evidence="1">F-ATPase subunit beta</fullName>
    </alternativeName>
</protein>
<reference key="1">
    <citation type="journal article" date="2008" name="PLoS ONE">
        <title>Comparative analysis of Acinetobacters: three genomes for three lifestyles.</title>
        <authorList>
            <person name="Vallenet D."/>
            <person name="Nordmann P."/>
            <person name="Barbe V."/>
            <person name="Poirel L."/>
            <person name="Mangenot S."/>
            <person name="Bataille E."/>
            <person name="Dossat C."/>
            <person name="Gas S."/>
            <person name="Kreimeyer A."/>
            <person name="Lenoble P."/>
            <person name="Oztas S."/>
            <person name="Poulain J."/>
            <person name="Segurens B."/>
            <person name="Robert C."/>
            <person name="Abergel C."/>
            <person name="Claverie J.-M."/>
            <person name="Raoult D."/>
            <person name="Medigue C."/>
            <person name="Weissenbach J."/>
            <person name="Cruveiller S."/>
        </authorList>
    </citation>
    <scope>NUCLEOTIDE SEQUENCE [LARGE SCALE GENOMIC DNA]</scope>
    <source>
        <strain>SDF</strain>
    </source>
</reference>
<dbReference type="EC" id="7.1.2.2" evidence="1"/>
<dbReference type="EMBL" id="CU468230">
    <property type="protein sequence ID" value="CAO99574.1"/>
    <property type="molecule type" value="Genomic_DNA"/>
</dbReference>
<dbReference type="SMR" id="B0VNK4"/>
<dbReference type="KEGG" id="abm:ABSDF0170"/>
<dbReference type="HOGENOM" id="CLU_022398_0_2_6"/>
<dbReference type="Proteomes" id="UP000001741">
    <property type="component" value="Chromosome"/>
</dbReference>
<dbReference type="GO" id="GO:0005886">
    <property type="term" value="C:plasma membrane"/>
    <property type="evidence" value="ECO:0007669"/>
    <property type="project" value="UniProtKB-SubCell"/>
</dbReference>
<dbReference type="GO" id="GO:0045259">
    <property type="term" value="C:proton-transporting ATP synthase complex"/>
    <property type="evidence" value="ECO:0007669"/>
    <property type="project" value="UniProtKB-KW"/>
</dbReference>
<dbReference type="GO" id="GO:0005524">
    <property type="term" value="F:ATP binding"/>
    <property type="evidence" value="ECO:0007669"/>
    <property type="project" value="UniProtKB-UniRule"/>
</dbReference>
<dbReference type="GO" id="GO:0016887">
    <property type="term" value="F:ATP hydrolysis activity"/>
    <property type="evidence" value="ECO:0007669"/>
    <property type="project" value="InterPro"/>
</dbReference>
<dbReference type="GO" id="GO:0046933">
    <property type="term" value="F:proton-transporting ATP synthase activity, rotational mechanism"/>
    <property type="evidence" value="ECO:0007669"/>
    <property type="project" value="UniProtKB-UniRule"/>
</dbReference>
<dbReference type="CDD" id="cd18110">
    <property type="entry name" value="ATP-synt_F1_beta_C"/>
    <property type="match status" value="1"/>
</dbReference>
<dbReference type="CDD" id="cd18115">
    <property type="entry name" value="ATP-synt_F1_beta_N"/>
    <property type="match status" value="1"/>
</dbReference>
<dbReference type="CDD" id="cd01133">
    <property type="entry name" value="F1-ATPase_beta_CD"/>
    <property type="match status" value="1"/>
</dbReference>
<dbReference type="FunFam" id="1.10.1140.10:FF:000001">
    <property type="entry name" value="ATP synthase subunit beta"/>
    <property type="match status" value="1"/>
</dbReference>
<dbReference type="FunFam" id="3.40.50.300:FF:000004">
    <property type="entry name" value="ATP synthase subunit beta"/>
    <property type="match status" value="1"/>
</dbReference>
<dbReference type="Gene3D" id="2.40.10.170">
    <property type="match status" value="1"/>
</dbReference>
<dbReference type="Gene3D" id="1.10.1140.10">
    <property type="entry name" value="Bovine Mitochondrial F1-atpase, Atp Synthase Beta Chain, Chain D, domain 3"/>
    <property type="match status" value="1"/>
</dbReference>
<dbReference type="Gene3D" id="3.40.50.300">
    <property type="entry name" value="P-loop containing nucleotide triphosphate hydrolases"/>
    <property type="match status" value="1"/>
</dbReference>
<dbReference type="HAMAP" id="MF_01347">
    <property type="entry name" value="ATP_synth_beta_bact"/>
    <property type="match status" value="1"/>
</dbReference>
<dbReference type="InterPro" id="IPR003593">
    <property type="entry name" value="AAA+_ATPase"/>
</dbReference>
<dbReference type="InterPro" id="IPR055190">
    <property type="entry name" value="ATP-synt_VA_C"/>
</dbReference>
<dbReference type="InterPro" id="IPR005722">
    <property type="entry name" value="ATP_synth_F1_bsu"/>
</dbReference>
<dbReference type="InterPro" id="IPR020003">
    <property type="entry name" value="ATPase_a/bsu_AS"/>
</dbReference>
<dbReference type="InterPro" id="IPR050053">
    <property type="entry name" value="ATPase_alpha/beta_chains"/>
</dbReference>
<dbReference type="InterPro" id="IPR004100">
    <property type="entry name" value="ATPase_F1/V1/A1_a/bsu_N"/>
</dbReference>
<dbReference type="InterPro" id="IPR036121">
    <property type="entry name" value="ATPase_F1/V1/A1_a/bsu_N_sf"/>
</dbReference>
<dbReference type="InterPro" id="IPR000194">
    <property type="entry name" value="ATPase_F1/V1/A1_a/bsu_nucl-bd"/>
</dbReference>
<dbReference type="InterPro" id="IPR024034">
    <property type="entry name" value="ATPase_F1/V1_b/a_C"/>
</dbReference>
<dbReference type="InterPro" id="IPR027417">
    <property type="entry name" value="P-loop_NTPase"/>
</dbReference>
<dbReference type="NCBIfam" id="TIGR01039">
    <property type="entry name" value="atpD"/>
    <property type="match status" value="1"/>
</dbReference>
<dbReference type="PANTHER" id="PTHR15184">
    <property type="entry name" value="ATP SYNTHASE"/>
    <property type="match status" value="1"/>
</dbReference>
<dbReference type="PANTHER" id="PTHR15184:SF71">
    <property type="entry name" value="ATP SYNTHASE SUBUNIT BETA, MITOCHONDRIAL"/>
    <property type="match status" value="1"/>
</dbReference>
<dbReference type="Pfam" id="PF00006">
    <property type="entry name" value="ATP-synt_ab"/>
    <property type="match status" value="1"/>
</dbReference>
<dbReference type="Pfam" id="PF02874">
    <property type="entry name" value="ATP-synt_ab_N"/>
    <property type="match status" value="1"/>
</dbReference>
<dbReference type="Pfam" id="PF22919">
    <property type="entry name" value="ATP-synt_VA_C"/>
    <property type="match status" value="1"/>
</dbReference>
<dbReference type="SMART" id="SM00382">
    <property type="entry name" value="AAA"/>
    <property type="match status" value="1"/>
</dbReference>
<dbReference type="SUPFAM" id="SSF47917">
    <property type="entry name" value="C-terminal domain of alpha and beta subunits of F1 ATP synthase"/>
    <property type="match status" value="1"/>
</dbReference>
<dbReference type="SUPFAM" id="SSF50615">
    <property type="entry name" value="N-terminal domain of alpha and beta subunits of F1 ATP synthase"/>
    <property type="match status" value="1"/>
</dbReference>
<dbReference type="SUPFAM" id="SSF52540">
    <property type="entry name" value="P-loop containing nucleoside triphosphate hydrolases"/>
    <property type="match status" value="1"/>
</dbReference>
<dbReference type="PROSITE" id="PS00152">
    <property type="entry name" value="ATPASE_ALPHA_BETA"/>
    <property type="match status" value="1"/>
</dbReference>
<name>ATPB_ACIBS</name>
<organism>
    <name type="scientific">Acinetobacter baumannii (strain SDF)</name>
    <dbReference type="NCBI Taxonomy" id="509170"/>
    <lineage>
        <taxon>Bacteria</taxon>
        <taxon>Pseudomonadati</taxon>
        <taxon>Pseudomonadota</taxon>
        <taxon>Gammaproteobacteria</taxon>
        <taxon>Moraxellales</taxon>
        <taxon>Moraxellaceae</taxon>
        <taxon>Acinetobacter</taxon>
        <taxon>Acinetobacter calcoaceticus/baumannii complex</taxon>
    </lineage>
</organism>
<keyword id="KW-0066">ATP synthesis</keyword>
<keyword id="KW-0067">ATP-binding</keyword>
<keyword id="KW-0997">Cell inner membrane</keyword>
<keyword id="KW-1003">Cell membrane</keyword>
<keyword id="KW-0139">CF(1)</keyword>
<keyword id="KW-0375">Hydrogen ion transport</keyword>
<keyword id="KW-0406">Ion transport</keyword>
<keyword id="KW-0472">Membrane</keyword>
<keyword id="KW-0547">Nucleotide-binding</keyword>
<keyword id="KW-1278">Translocase</keyword>
<keyword id="KW-0813">Transport</keyword>
<gene>
    <name evidence="1" type="primary">atpD</name>
    <name type="ordered locus">ABSDF0170</name>
</gene>
<feature type="chain" id="PRO_1000143463" description="ATP synthase subunit beta">
    <location>
        <begin position="1"/>
        <end position="464"/>
    </location>
</feature>
<feature type="binding site" evidence="1">
    <location>
        <begin position="148"/>
        <end position="155"/>
    </location>
    <ligand>
        <name>ATP</name>
        <dbReference type="ChEBI" id="CHEBI:30616"/>
    </ligand>
</feature>
<evidence type="ECO:0000255" key="1">
    <source>
        <dbReference type="HAMAP-Rule" id="MF_01347"/>
    </source>
</evidence>
<sequence length="464" mass="50274">MSSGRIIQIIGAVIDVEFERTSVPKIYDALQVDGTETTLEVQQQLGDGVVRTIAMGSTEGLKRGLTVTSTNAPISVPVGTATLGRIMDVLGRPIDEAGPVATEERLPIHRQAPSYAEQAASTDLLETGIKVIDLLCPFAKGGKVGLFGGAGVGKTVNMMELINNIAKAHSGLSVFAGVGERTREGNDFYHEMKDSNVLDKVAMVYGQMNEPPGNRLRVALTGLTMAEYFRDEKDENGKGRDVLLFVDNIYRYTLAGTEVSALLGRMPSAVGYQPTLAEEMGVLQERITSTKSGSITSIQAVYVPADDLTDPSPATTFAHLDATVVLSRDIASSGIYPAIDPLDSTSRQLDPLVVGQEHYEIARAVQNVLQRYKELKDIIAILGMDELAEEDKLVVYRARKIQRFFSQPFHVAEVFTGAPGKLVPLKETIRGFKGLLAGEYDHIPEQAFYMVGGIDEVIAKAEKL</sequence>
<comment type="function">
    <text evidence="1">Produces ATP from ADP in the presence of a proton gradient across the membrane. The catalytic sites are hosted primarily by the beta subunits.</text>
</comment>
<comment type="catalytic activity">
    <reaction evidence="1">
        <text>ATP + H2O + 4 H(+)(in) = ADP + phosphate + 5 H(+)(out)</text>
        <dbReference type="Rhea" id="RHEA:57720"/>
        <dbReference type="ChEBI" id="CHEBI:15377"/>
        <dbReference type="ChEBI" id="CHEBI:15378"/>
        <dbReference type="ChEBI" id="CHEBI:30616"/>
        <dbReference type="ChEBI" id="CHEBI:43474"/>
        <dbReference type="ChEBI" id="CHEBI:456216"/>
        <dbReference type="EC" id="7.1.2.2"/>
    </reaction>
</comment>
<comment type="subunit">
    <text evidence="1">F-type ATPases have 2 components, CF(1) - the catalytic core - and CF(0) - the membrane proton channel. CF(1) has five subunits: alpha(3), beta(3), gamma(1), delta(1), epsilon(1). CF(0) has three main subunits: a(1), b(2) and c(9-12). The alpha and beta chains form an alternating ring which encloses part of the gamma chain. CF(1) is attached to CF(0) by a central stalk formed by the gamma and epsilon chains, while a peripheral stalk is formed by the delta and b chains.</text>
</comment>
<comment type="subcellular location">
    <subcellularLocation>
        <location evidence="1">Cell inner membrane</location>
        <topology evidence="1">Peripheral membrane protein</topology>
    </subcellularLocation>
</comment>
<comment type="similarity">
    <text evidence="1">Belongs to the ATPase alpha/beta chains family.</text>
</comment>
<proteinExistence type="inferred from homology"/>